<protein>
    <recommendedName>
        <fullName>Putative disease resistance RPP13-like protein 2</fullName>
    </recommendedName>
</protein>
<organism>
    <name type="scientific">Arabidopsis thaliana</name>
    <name type="common">Mouse-ear cress</name>
    <dbReference type="NCBI Taxonomy" id="3702"/>
    <lineage>
        <taxon>Eukaryota</taxon>
        <taxon>Viridiplantae</taxon>
        <taxon>Streptophyta</taxon>
        <taxon>Embryophyta</taxon>
        <taxon>Tracheophyta</taxon>
        <taxon>Spermatophyta</taxon>
        <taxon>Magnoliopsida</taxon>
        <taxon>eudicotyledons</taxon>
        <taxon>Gunneridae</taxon>
        <taxon>Pentapetalae</taxon>
        <taxon>rosids</taxon>
        <taxon>malvids</taxon>
        <taxon>Brassicales</taxon>
        <taxon>Brassicaceae</taxon>
        <taxon>Camelineae</taxon>
        <taxon>Arabidopsis</taxon>
    </lineage>
</organism>
<proteinExistence type="inferred from homology"/>
<dbReference type="EMBL" id="AL096859">
    <property type="protein sequence ID" value="CAB51194.1"/>
    <property type="molecule type" value="Genomic_DNA"/>
</dbReference>
<dbReference type="EMBL" id="CP002686">
    <property type="protein sequence ID" value="AEE78196.1"/>
    <property type="molecule type" value="Genomic_DNA"/>
</dbReference>
<dbReference type="PIR" id="T12979">
    <property type="entry name" value="T12979"/>
</dbReference>
<dbReference type="RefSeq" id="NP_190255.1">
    <property type="nucleotide sequence ID" value="NM_114538.2"/>
</dbReference>
<dbReference type="SMR" id="Q9STE5"/>
<dbReference type="BioGRID" id="9144">
    <property type="interactions" value="2"/>
</dbReference>
<dbReference type="IntAct" id="Q9STE5">
    <property type="interactions" value="1"/>
</dbReference>
<dbReference type="STRING" id="3702.Q9STE5"/>
<dbReference type="iPTMnet" id="Q9STE5"/>
<dbReference type="PaxDb" id="3702-AT3G46710.1"/>
<dbReference type="EnsemblPlants" id="AT3G46710.1">
    <property type="protein sequence ID" value="AT3G46710.1"/>
    <property type="gene ID" value="AT3G46710"/>
</dbReference>
<dbReference type="GeneID" id="823824"/>
<dbReference type="Gramene" id="AT3G46710.1">
    <property type="protein sequence ID" value="AT3G46710.1"/>
    <property type="gene ID" value="AT3G46710"/>
</dbReference>
<dbReference type="KEGG" id="ath:AT3G46710"/>
<dbReference type="Araport" id="AT3G46710"/>
<dbReference type="TAIR" id="AT3G46710"/>
<dbReference type="eggNOG" id="KOG4658">
    <property type="taxonomic scope" value="Eukaryota"/>
</dbReference>
<dbReference type="HOGENOM" id="CLU_000837_25_4_1"/>
<dbReference type="InParanoid" id="Q9STE5"/>
<dbReference type="OMA" id="TICTIHY"/>
<dbReference type="PhylomeDB" id="Q9STE5"/>
<dbReference type="PRO" id="PR:Q9STE5"/>
<dbReference type="Proteomes" id="UP000006548">
    <property type="component" value="Chromosome 3"/>
</dbReference>
<dbReference type="ExpressionAtlas" id="Q9STE5">
    <property type="expression patterns" value="baseline and differential"/>
</dbReference>
<dbReference type="GO" id="GO:0043531">
    <property type="term" value="F:ADP binding"/>
    <property type="evidence" value="ECO:0007669"/>
    <property type="project" value="InterPro"/>
</dbReference>
<dbReference type="GO" id="GO:0005524">
    <property type="term" value="F:ATP binding"/>
    <property type="evidence" value="ECO:0007669"/>
    <property type="project" value="UniProtKB-KW"/>
</dbReference>
<dbReference type="GO" id="GO:0006952">
    <property type="term" value="P:defense response"/>
    <property type="evidence" value="ECO:0007669"/>
    <property type="project" value="UniProtKB-KW"/>
</dbReference>
<dbReference type="GO" id="GO:0051707">
    <property type="term" value="P:response to other organism"/>
    <property type="evidence" value="ECO:0007669"/>
    <property type="project" value="UniProtKB-ARBA"/>
</dbReference>
<dbReference type="CDD" id="cd14798">
    <property type="entry name" value="RX-CC_like"/>
    <property type="match status" value="1"/>
</dbReference>
<dbReference type="FunFam" id="3.40.50.300:FF:001091">
    <property type="entry name" value="Probable disease resistance protein At1g61300"/>
    <property type="match status" value="1"/>
</dbReference>
<dbReference type="FunFam" id="1.10.10.10:FF:000322">
    <property type="entry name" value="Probable disease resistance protein At1g63360"/>
    <property type="match status" value="1"/>
</dbReference>
<dbReference type="Gene3D" id="1.20.5.4130">
    <property type="match status" value="1"/>
</dbReference>
<dbReference type="Gene3D" id="1.10.8.430">
    <property type="entry name" value="Helical domain of apoptotic protease-activating factors"/>
    <property type="match status" value="1"/>
</dbReference>
<dbReference type="Gene3D" id="3.40.50.300">
    <property type="entry name" value="P-loop containing nucleotide triphosphate hydrolases"/>
    <property type="match status" value="1"/>
</dbReference>
<dbReference type="Gene3D" id="3.80.10.10">
    <property type="entry name" value="Ribonuclease Inhibitor"/>
    <property type="match status" value="1"/>
</dbReference>
<dbReference type="Gene3D" id="1.10.10.10">
    <property type="entry name" value="Winged helix-like DNA-binding domain superfamily/Winged helix DNA-binding domain"/>
    <property type="match status" value="1"/>
</dbReference>
<dbReference type="InterPro" id="IPR042197">
    <property type="entry name" value="Apaf_helical"/>
</dbReference>
<dbReference type="InterPro" id="IPR044974">
    <property type="entry name" value="Disease_R_plants"/>
</dbReference>
<dbReference type="InterPro" id="IPR001611">
    <property type="entry name" value="Leu-rich_rpt"/>
</dbReference>
<dbReference type="InterPro" id="IPR032675">
    <property type="entry name" value="LRR_dom_sf"/>
</dbReference>
<dbReference type="InterPro" id="IPR055414">
    <property type="entry name" value="LRR_R13L4/SHOC2-like"/>
</dbReference>
<dbReference type="InterPro" id="IPR002182">
    <property type="entry name" value="NB-ARC"/>
</dbReference>
<dbReference type="InterPro" id="IPR027417">
    <property type="entry name" value="P-loop_NTPase"/>
</dbReference>
<dbReference type="InterPro" id="IPR038005">
    <property type="entry name" value="RX-like_CC"/>
</dbReference>
<dbReference type="InterPro" id="IPR041118">
    <property type="entry name" value="Rx_N"/>
</dbReference>
<dbReference type="InterPro" id="IPR036388">
    <property type="entry name" value="WH-like_DNA-bd_sf"/>
</dbReference>
<dbReference type="PANTHER" id="PTHR23155">
    <property type="entry name" value="DISEASE RESISTANCE PROTEIN RP"/>
    <property type="match status" value="1"/>
</dbReference>
<dbReference type="PANTHER" id="PTHR23155:SF1193">
    <property type="entry name" value="DISEASE RESISTANCE PROTEIN RPP13-RELATED"/>
    <property type="match status" value="1"/>
</dbReference>
<dbReference type="Pfam" id="PF23598">
    <property type="entry name" value="LRR_14"/>
    <property type="match status" value="1"/>
</dbReference>
<dbReference type="Pfam" id="PF00931">
    <property type="entry name" value="NB-ARC"/>
    <property type="match status" value="1"/>
</dbReference>
<dbReference type="Pfam" id="PF18052">
    <property type="entry name" value="Rx_N"/>
    <property type="match status" value="1"/>
</dbReference>
<dbReference type="Pfam" id="PF23559">
    <property type="entry name" value="WH_DRP"/>
    <property type="match status" value="1"/>
</dbReference>
<dbReference type="PRINTS" id="PR00364">
    <property type="entry name" value="DISEASERSIST"/>
</dbReference>
<dbReference type="SUPFAM" id="SSF52058">
    <property type="entry name" value="L domain-like"/>
    <property type="match status" value="1"/>
</dbReference>
<dbReference type="SUPFAM" id="SSF52540">
    <property type="entry name" value="P-loop containing nucleoside triphosphate hydrolases"/>
    <property type="match status" value="1"/>
</dbReference>
<dbReference type="PROSITE" id="PS51450">
    <property type="entry name" value="LRR"/>
    <property type="match status" value="2"/>
</dbReference>
<keyword id="KW-0067">ATP-binding</keyword>
<keyword id="KW-0175">Coiled coil</keyword>
<keyword id="KW-0433">Leucine-rich repeat</keyword>
<keyword id="KW-0547">Nucleotide-binding</keyword>
<keyword id="KW-0611">Plant defense</keyword>
<keyword id="KW-1185">Reference proteome</keyword>
<keyword id="KW-0677">Repeat</keyword>
<reference key="1">
    <citation type="journal article" date="2000" name="Nature">
        <title>Sequence and analysis of chromosome 3 of the plant Arabidopsis thaliana.</title>
        <authorList>
            <person name="Salanoubat M."/>
            <person name="Lemcke K."/>
            <person name="Rieger M."/>
            <person name="Ansorge W."/>
            <person name="Unseld M."/>
            <person name="Fartmann B."/>
            <person name="Valle G."/>
            <person name="Bloecker H."/>
            <person name="Perez-Alonso M."/>
            <person name="Obermaier B."/>
            <person name="Delseny M."/>
            <person name="Boutry M."/>
            <person name="Grivell L.A."/>
            <person name="Mache R."/>
            <person name="Puigdomenech P."/>
            <person name="De Simone V."/>
            <person name="Choisne N."/>
            <person name="Artiguenave F."/>
            <person name="Robert C."/>
            <person name="Brottier P."/>
            <person name="Wincker P."/>
            <person name="Cattolico L."/>
            <person name="Weissenbach J."/>
            <person name="Saurin W."/>
            <person name="Quetier F."/>
            <person name="Schaefer M."/>
            <person name="Mueller-Auer S."/>
            <person name="Gabel C."/>
            <person name="Fuchs M."/>
            <person name="Benes V."/>
            <person name="Wurmbach E."/>
            <person name="Drzonek H."/>
            <person name="Erfle H."/>
            <person name="Jordan N."/>
            <person name="Bangert S."/>
            <person name="Wiedelmann R."/>
            <person name="Kranz H."/>
            <person name="Voss H."/>
            <person name="Holland R."/>
            <person name="Brandt P."/>
            <person name="Nyakatura G."/>
            <person name="Vezzi A."/>
            <person name="D'Angelo M."/>
            <person name="Pallavicini A."/>
            <person name="Toppo S."/>
            <person name="Simionati B."/>
            <person name="Conrad A."/>
            <person name="Hornischer K."/>
            <person name="Kauer G."/>
            <person name="Loehnert T.-H."/>
            <person name="Nordsiek G."/>
            <person name="Reichelt J."/>
            <person name="Scharfe M."/>
            <person name="Schoen O."/>
            <person name="Bargues M."/>
            <person name="Terol J."/>
            <person name="Climent J."/>
            <person name="Navarro P."/>
            <person name="Collado C."/>
            <person name="Perez-Perez A."/>
            <person name="Ottenwaelder B."/>
            <person name="Duchemin D."/>
            <person name="Cooke R."/>
            <person name="Laudie M."/>
            <person name="Berger-Llauro C."/>
            <person name="Purnelle B."/>
            <person name="Masuy D."/>
            <person name="de Haan M."/>
            <person name="Maarse A.C."/>
            <person name="Alcaraz J.-P."/>
            <person name="Cottet A."/>
            <person name="Casacuberta E."/>
            <person name="Monfort A."/>
            <person name="Argiriou A."/>
            <person name="Flores M."/>
            <person name="Liguori R."/>
            <person name="Vitale D."/>
            <person name="Mannhaupt G."/>
            <person name="Haase D."/>
            <person name="Schoof H."/>
            <person name="Rudd S."/>
            <person name="Zaccaria P."/>
            <person name="Mewes H.-W."/>
            <person name="Mayer K.F.X."/>
            <person name="Kaul S."/>
            <person name="Town C.D."/>
            <person name="Koo H.L."/>
            <person name="Tallon L.J."/>
            <person name="Jenkins J."/>
            <person name="Rooney T."/>
            <person name="Rizzo M."/>
            <person name="Walts A."/>
            <person name="Utterback T."/>
            <person name="Fujii C.Y."/>
            <person name="Shea T.P."/>
            <person name="Creasy T.H."/>
            <person name="Haas B."/>
            <person name="Maiti R."/>
            <person name="Wu D."/>
            <person name="Peterson J."/>
            <person name="Van Aken S."/>
            <person name="Pai G."/>
            <person name="Militscher J."/>
            <person name="Sellers P."/>
            <person name="Gill J.E."/>
            <person name="Feldblyum T.V."/>
            <person name="Preuss D."/>
            <person name="Lin X."/>
            <person name="Nierman W.C."/>
            <person name="Salzberg S.L."/>
            <person name="White O."/>
            <person name="Venter J.C."/>
            <person name="Fraser C.M."/>
            <person name="Kaneko T."/>
            <person name="Nakamura Y."/>
            <person name="Sato S."/>
            <person name="Kato T."/>
            <person name="Asamizu E."/>
            <person name="Sasamoto S."/>
            <person name="Kimura T."/>
            <person name="Idesawa K."/>
            <person name="Kawashima K."/>
            <person name="Kishida Y."/>
            <person name="Kiyokawa C."/>
            <person name="Kohara M."/>
            <person name="Matsumoto M."/>
            <person name="Matsuno A."/>
            <person name="Muraki A."/>
            <person name="Nakayama S."/>
            <person name="Nakazaki N."/>
            <person name="Shinpo S."/>
            <person name="Takeuchi C."/>
            <person name="Wada T."/>
            <person name="Watanabe A."/>
            <person name="Yamada M."/>
            <person name="Yasuda M."/>
            <person name="Tabata S."/>
        </authorList>
    </citation>
    <scope>NUCLEOTIDE SEQUENCE [LARGE SCALE GENOMIC DNA]</scope>
    <source>
        <strain>cv. Columbia</strain>
    </source>
</reference>
<reference key="2">
    <citation type="journal article" date="2017" name="Plant J.">
        <title>Araport11: a complete reannotation of the Arabidopsis thaliana reference genome.</title>
        <authorList>
            <person name="Cheng C.Y."/>
            <person name="Krishnakumar V."/>
            <person name="Chan A.P."/>
            <person name="Thibaud-Nissen F."/>
            <person name="Schobel S."/>
            <person name="Town C.D."/>
        </authorList>
    </citation>
    <scope>GENOME REANNOTATION</scope>
    <source>
        <strain>cv. Columbia</strain>
    </source>
</reference>
<gene>
    <name type="primary">RPP13L2</name>
    <name type="ordered locus">At3g46710</name>
    <name type="ORF">T6H20.260</name>
</gene>
<comment type="function">
    <text>Potential disease resistance protein.</text>
</comment>
<comment type="domain">
    <text evidence="1">The LRR repeats probably act as specificity determinant of pathogen recognition.</text>
</comment>
<comment type="similarity">
    <text evidence="3">Belongs to the disease resistance NB-LRR family. RPP13 subfamily.</text>
</comment>
<comment type="online information" name="NIB-LRRS">
    <link uri="http://niblrrs.ucdavis.edu"/>
    <text>Functional and comparative genomics of disease resistance gene homologs</text>
</comment>
<accession>Q9STE5</accession>
<evidence type="ECO:0000250" key="1"/>
<evidence type="ECO:0000255" key="2"/>
<evidence type="ECO:0000305" key="3"/>
<name>R13L2_ARATH</name>
<feature type="chain" id="PRO_0000212727" description="Putative disease resistance RPP13-like protein 2">
    <location>
        <begin position="1"/>
        <end position="847"/>
    </location>
</feature>
<feature type="domain" description="NB-ARC">
    <location>
        <begin position="142"/>
        <end position="446"/>
    </location>
</feature>
<feature type="repeat" description="LRR 1">
    <location>
        <begin position="587"/>
        <end position="610"/>
    </location>
</feature>
<feature type="repeat" description="LRR 2">
    <location>
        <begin position="612"/>
        <end position="634"/>
    </location>
</feature>
<feature type="repeat" description="LRR 3">
    <location>
        <begin position="703"/>
        <end position="726"/>
    </location>
</feature>
<feature type="repeat" description="LRR 4">
    <location>
        <begin position="749"/>
        <end position="774"/>
    </location>
</feature>
<feature type="repeat" description="LRR 5">
    <location>
        <begin position="807"/>
        <end position="830"/>
    </location>
</feature>
<feature type="coiled-coil region" evidence="2">
    <location>
        <begin position="26"/>
        <end position="42"/>
    </location>
</feature>
<feature type="binding site" evidence="2">
    <location>
        <begin position="191"/>
        <end position="198"/>
    </location>
    <ligand>
        <name>ATP</name>
        <dbReference type="ChEBI" id="CHEBI:30616"/>
    </ligand>
</feature>
<sequence length="847" mass="98479">MVDAITEFVVGKIDNYLIEEAPMLIGVKDDLEELKTELTCIQVYLKNVEVCDKEDEVSKEWTKLVLDIAYDVEDVLDTYFLKLEKRLHRLGLMRLTNIISDKKDAYNILDDIKTLKRRTLDVTRKLEMYGIGNFNEHRVVASTSRVREVRRARSDDQEERVVGLTDDAKVLLTKLLDDDGDNKIYMISIFGMEGLGKTSLARKLFNSSDVKESFEYRVWTNVSGECNTRDILMRIISSLEETSEGELEKMAQQELEVYLHDILQEKRYLVVVDDIWESEALESLKRALPCSYQGSRVIITTSIRVVAEGRDKRVYTHNIRFLTFKESWNLFEKKAFRYILKVDQELQKIGKEMVQKCGGLPRTTVVLAGLMSRKKPNEWNDVWSSLRVKDDNIHVSSLFDLSFKDMGHELKLCFLYLSVFPEDYEVDVEKLIQLLVAEGFIQEDEEMTMEDVARYYIEDLVYISLVEVVKRKKGKLMSFRIHDLVREFTIKKSKELNFVNVYDEQHSSTTSRREVVHHLMDDNYLCDRRVNTQMRSFLFFGKRRNDITYVETITLKLKLLRVLNLGGLHFICQGYSPWSLPDVIGGLVHLRYLGIADTVVNNLPDFISNLRFLQTLDASGNSFERMTDLSNLTSLRHLTGRFIGELLIGDAVNLQTLRSISSYSWSKLKHELLINLRDLEIYEFHILNDQIKVPLDLVSLSKLKNLRVLKIEVVSFSLFSEETVRFELLVKLTLHCDVRRLPRDMDLIFPSLESLTLVTNLQEDPMPTLQKLQRLENLVLYSCVYPGAKMFINAQGFGRLRKLKVIIKRLDELEIEEEAMPCLMKLNLDNKDGATKLMIPDRMRAFV</sequence>